<feature type="chain" id="PRO_0000094751" description="Tyrosine-protein phosphatase non-receptor type 1">
    <location>
        <begin position="1"/>
        <end position="434"/>
    </location>
</feature>
<feature type="domain" description="Tyrosine-protein phosphatase" evidence="3">
    <location>
        <begin position="3"/>
        <end position="277"/>
    </location>
</feature>
<feature type="region of interest" description="Disordered" evidence="5">
    <location>
        <begin position="291"/>
        <end position="319"/>
    </location>
</feature>
<feature type="active site" description="Phosphocysteine intermediate" evidence="3 4">
    <location>
        <position position="215"/>
    </location>
</feature>
<feature type="binding site" evidence="1">
    <location>
        <position position="181"/>
    </location>
    <ligand>
        <name>substrate</name>
    </ligand>
</feature>
<feature type="binding site" evidence="1">
    <location>
        <begin position="215"/>
        <end position="221"/>
    </location>
    <ligand>
        <name>substrate</name>
    </ligand>
</feature>
<feature type="binding site" evidence="1">
    <location>
        <position position="262"/>
    </location>
    <ligand>
        <name>substrate</name>
    </ligand>
</feature>
<feature type="modified residue" description="Phosphoserine" evidence="1">
    <location>
        <position position="50"/>
    </location>
</feature>
<feature type="sequence conflict" description="In Ref. 3; AAA91186." evidence="6" ref="3">
    <original>A</original>
    <variation>R</variation>
    <location>
        <position position="14"/>
    </location>
</feature>
<feature type="sequence conflict" description="In Ref. 3; AAA91186." evidence="6" ref="3">
    <original>GD</original>
    <variation>RC</variation>
    <location>
        <begin position="62"/>
        <end position="63"/>
    </location>
</feature>
<gene>
    <name type="primary">PTPN1</name>
    <name type="synonym">PTP1B</name>
</gene>
<name>PTN1_CHICK</name>
<protein>
    <recommendedName>
        <fullName>Tyrosine-protein phosphatase non-receptor type 1</fullName>
        <ecNumber>3.1.3.48</ecNumber>
    </recommendedName>
    <alternativeName>
        <fullName>CPTP1</fullName>
    </alternativeName>
    <alternativeName>
        <fullName>Protein-tyrosine phosphatase 1B</fullName>
        <shortName>PTP-1B</shortName>
    </alternativeName>
</protein>
<sequence length="434" mass="50334">MEIEKEFHRLDQAASWAAIYQDIRHEASDFPCKVAKHPRNKNRNRYRDVSPFDHSRIKLNQGDNDYINASLIKMEEAQRSYILTQGPLPNTCGHFWEMVWEQKSRGVVMLNRVMEKGSIKCAQYWPRKEEKEMFFEDTNLKLTLISEDIKSYYTVRQLELENLTTQETREILHFHYTTWPDFGVPESPASFLNFLFKVRESGSLNPEYGPVVVHCSAGIGRSGTFCLVDTCLLLMDKRKDPSSVDVKQVLLEMRKYRMGLIQTADQLRFSYLAVIEGAKFIMGDASVQEQWKELSNEDLDPPPEHTPPPPRPPKRTSEMHNGRMHEHAEFFPKHQVVEEEIRCSVSTAEETVSDGRVFSSVPLITDSTSQDTEIRRRTVGENLHVTAHKEESKSESVEEDDENMMTTWKPFLVNICMFTFLTAGAYLCYRVCFH</sequence>
<keyword id="KW-0256">Endoplasmic reticulum</keyword>
<keyword id="KW-0378">Hydrolase</keyword>
<keyword id="KW-0472">Membrane</keyword>
<keyword id="KW-0597">Phosphoprotein</keyword>
<keyword id="KW-0904">Protein phosphatase</keyword>
<keyword id="KW-1185">Reference proteome</keyword>
<comment type="function">
    <text evidence="1">May play an important role in CKII- and p60c-src-induced signal transduction cascades. May regulate the EFNA5-EPHA3 signaling pathway which modulates cell reorganization and cell-cell repulsion. May also regulate the hepatocyte growth factor receptor signaling pathway through dephosphorylation of MET (By similarity).</text>
</comment>
<comment type="catalytic activity">
    <reaction evidence="4">
        <text>O-phospho-L-tyrosyl-[protein] + H2O = L-tyrosyl-[protein] + phosphate</text>
        <dbReference type="Rhea" id="RHEA:10684"/>
        <dbReference type="Rhea" id="RHEA-COMP:10136"/>
        <dbReference type="Rhea" id="RHEA-COMP:20101"/>
        <dbReference type="ChEBI" id="CHEBI:15377"/>
        <dbReference type="ChEBI" id="CHEBI:43474"/>
        <dbReference type="ChEBI" id="CHEBI:46858"/>
        <dbReference type="ChEBI" id="CHEBI:61978"/>
        <dbReference type="EC" id="3.1.3.48"/>
    </reaction>
</comment>
<comment type="subunit">
    <text evidence="2">Interacts with EPHA3 (phosphorylated); dephosphorylates EPHA3 and may regulate its trafficking and function. Interacts with MET. Interacts with NCK1.</text>
</comment>
<comment type="interaction">
    <interactant intactId="EBI-6938259">
        <id>O13016</id>
    </interactant>
    <interactant intactId="EBI-985728">
        <id>P10288</id>
        <label>CDH2</label>
    </interactant>
    <organismsDiffer>false</organismsDiffer>
    <experiments>10</experiments>
</comment>
<comment type="subcellular location">
    <subcellularLocation>
        <location evidence="1">Endoplasmic reticulum membrane</location>
        <topology evidence="1">Peripheral membrane protein</topology>
        <orientation evidence="1">Cytoplasmic side</orientation>
    </subcellularLocation>
</comment>
<comment type="PTM">
    <text>Phosphorylated on serine and threonine residues near the N-terminus by casein kinase II (CK2).</text>
</comment>
<comment type="similarity">
    <text evidence="6">Belongs to the protein-tyrosine phosphatase family. Non-receptor class 1 subfamily.</text>
</comment>
<dbReference type="EC" id="3.1.3.48"/>
<dbReference type="EMBL" id="U86410">
    <property type="protein sequence ID" value="AAB53270.1"/>
    <property type="molecule type" value="mRNA"/>
</dbReference>
<dbReference type="EMBL" id="U46662">
    <property type="protein sequence ID" value="AAA91186.1"/>
    <property type="molecule type" value="mRNA"/>
</dbReference>
<dbReference type="PIR" id="JW0049">
    <property type="entry name" value="JW0049"/>
</dbReference>
<dbReference type="RefSeq" id="NP_990206.1">
    <property type="nucleotide sequence ID" value="NM_204875.2"/>
</dbReference>
<dbReference type="SMR" id="O13016"/>
<dbReference type="BioGRID" id="675966">
    <property type="interactions" value="3"/>
</dbReference>
<dbReference type="FunCoup" id="O13016">
    <property type="interactions" value="2177"/>
</dbReference>
<dbReference type="IntAct" id="O13016">
    <property type="interactions" value="7"/>
</dbReference>
<dbReference type="MINT" id="O13016"/>
<dbReference type="STRING" id="9031.ENSGALP00000012986"/>
<dbReference type="iPTMnet" id="O13016"/>
<dbReference type="PaxDb" id="9031-ENSGALP00000032803"/>
<dbReference type="GeneID" id="395688"/>
<dbReference type="KEGG" id="gga:395688"/>
<dbReference type="CTD" id="5770"/>
<dbReference type="VEuPathDB" id="HostDB:geneid_395688"/>
<dbReference type="eggNOG" id="KOG0789">
    <property type="taxonomic scope" value="Eukaryota"/>
</dbReference>
<dbReference type="HOGENOM" id="CLU_001645_9_0_1"/>
<dbReference type="InParanoid" id="O13016"/>
<dbReference type="OrthoDB" id="9450131at2759"/>
<dbReference type="PhylomeDB" id="O13016"/>
<dbReference type="TreeFam" id="TF315897"/>
<dbReference type="PRO" id="PR:O13016"/>
<dbReference type="Proteomes" id="UP000000539">
    <property type="component" value="Unassembled WGS sequence"/>
</dbReference>
<dbReference type="GO" id="GO:0005737">
    <property type="term" value="C:cytoplasm"/>
    <property type="evidence" value="ECO:0000318"/>
    <property type="project" value="GO_Central"/>
</dbReference>
<dbReference type="GO" id="GO:0005769">
    <property type="term" value="C:early endosome"/>
    <property type="evidence" value="ECO:0000250"/>
    <property type="project" value="UniProtKB"/>
</dbReference>
<dbReference type="GO" id="GO:0005783">
    <property type="term" value="C:endoplasmic reticulum"/>
    <property type="evidence" value="ECO:0000318"/>
    <property type="project" value="GO_Central"/>
</dbReference>
<dbReference type="GO" id="GO:0005789">
    <property type="term" value="C:endoplasmic reticulum membrane"/>
    <property type="evidence" value="ECO:0007669"/>
    <property type="project" value="UniProtKB-SubCell"/>
</dbReference>
<dbReference type="GO" id="GO:0004726">
    <property type="term" value="F:non-membrane spanning protein tyrosine phosphatase activity"/>
    <property type="evidence" value="ECO:0000318"/>
    <property type="project" value="GO_Central"/>
</dbReference>
<dbReference type="GO" id="GO:0019901">
    <property type="term" value="F:protein kinase binding"/>
    <property type="evidence" value="ECO:0000318"/>
    <property type="project" value="GO_Central"/>
</dbReference>
<dbReference type="GO" id="GO:0004725">
    <property type="term" value="F:protein tyrosine phosphatase activity"/>
    <property type="evidence" value="ECO:0000250"/>
    <property type="project" value="UniProtKB"/>
</dbReference>
<dbReference type="GO" id="GO:0030036">
    <property type="term" value="P:actin cytoskeleton organization"/>
    <property type="evidence" value="ECO:0000250"/>
    <property type="project" value="UniProtKB"/>
</dbReference>
<dbReference type="GO" id="GO:0030968">
    <property type="term" value="P:endoplasmic reticulum unfolded protein response"/>
    <property type="evidence" value="ECO:0000250"/>
    <property type="project" value="UniProtKB"/>
</dbReference>
<dbReference type="GO" id="GO:0070373">
    <property type="term" value="P:negative regulation of ERK1 and ERK2 cascade"/>
    <property type="evidence" value="ECO:0000318"/>
    <property type="project" value="GO_Central"/>
</dbReference>
<dbReference type="GO" id="GO:1903898">
    <property type="term" value="P:negative regulation of PERK-mediated unfolded protein response"/>
    <property type="evidence" value="ECO:0000318"/>
    <property type="project" value="GO_Central"/>
</dbReference>
<dbReference type="GO" id="GO:0035335">
    <property type="term" value="P:peptidyl-tyrosine dephosphorylation"/>
    <property type="evidence" value="ECO:0000250"/>
    <property type="project" value="UniProtKB"/>
</dbReference>
<dbReference type="GO" id="GO:0030100">
    <property type="term" value="P:regulation of endocytosis"/>
    <property type="evidence" value="ECO:0000250"/>
    <property type="project" value="UniProtKB"/>
</dbReference>
<dbReference type="GO" id="GO:0009966">
    <property type="term" value="P:regulation of signal transduction"/>
    <property type="evidence" value="ECO:0000250"/>
    <property type="project" value="UniProtKB"/>
</dbReference>
<dbReference type="CDD" id="cd14608">
    <property type="entry name" value="PTPc-N1"/>
    <property type="match status" value="1"/>
</dbReference>
<dbReference type="FunFam" id="3.90.190.10:FF:000025">
    <property type="entry name" value="Tyrosine-protein phosphatase non-receptor type 1"/>
    <property type="match status" value="1"/>
</dbReference>
<dbReference type="Gene3D" id="3.90.190.10">
    <property type="entry name" value="Protein tyrosine phosphatase superfamily"/>
    <property type="match status" value="1"/>
</dbReference>
<dbReference type="InterPro" id="IPR051985">
    <property type="entry name" value="NR_tyrosine_phosphatase"/>
</dbReference>
<dbReference type="InterPro" id="IPR029021">
    <property type="entry name" value="Prot-tyrosine_phosphatase-like"/>
</dbReference>
<dbReference type="InterPro" id="IPR000242">
    <property type="entry name" value="PTP_cat"/>
</dbReference>
<dbReference type="InterPro" id="IPR012265">
    <property type="entry name" value="Ptpn1/Ptpn2"/>
</dbReference>
<dbReference type="InterPro" id="IPR016130">
    <property type="entry name" value="Tyr_Pase_AS"/>
</dbReference>
<dbReference type="InterPro" id="IPR003595">
    <property type="entry name" value="Tyr_Pase_cat"/>
</dbReference>
<dbReference type="InterPro" id="IPR000387">
    <property type="entry name" value="Tyr_Pase_dom"/>
</dbReference>
<dbReference type="PANTHER" id="PTHR46047:SF2">
    <property type="entry name" value="TYROSINE-PROTEIN PHOSPHATASE NON-RECEPTOR TYPE 1"/>
    <property type="match status" value="1"/>
</dbReference>
<dbReference type="PANTHER" id="PTHR46047">
    <property type="entry name" value="TYROSINE-PROTEIN PHOSPHATASE NON-RECEPTOR TYPE 61F"/>
    <property type="match status" value="1"/>
</dbReference>
<dbReference type="Pfam" id="PF00102">
    <property type="entry name" value="Y_phosphatase"/>
    <property type="match status" value="1"/>
</dbReference>
<dbReference type="PIRSF" id="PIRSF000926">
    <property type="entry name" value="Tyr-Ptase_nr1"/>
    <property type="match status" value="1"/>
</dbReference>
<dbReference type="PRINTS" id="PR00700">
    <property type="entry name" value="PRTYPHPHTASE"/>
</dbReference>
<dbReference type="SMART" id="SM00194">
    <property type="entry name" value="PTPc"/>
    <property type="match status" value="1"/>
</dbReference>
<dbReference type="SMART" id="SM00404">
    <property type="entry name" value="PTPc_motif"/>
    <property type="match status" value="1"/>
</dbReference>
<dbReference type="SUPFAM" id="SSF52799">
    <property type="entry name" value="(Phosphotyrosine protein) phosphatases II"/>
    <property type="match status" value="1"/>
</dbReference>
<dbReference type="PROSITE" id="PS00383">
    <property type="entry name" value="TYR_PHOSPHATASE_1"/>
    <property type="match status" value="1"/>
</dbReference>
<dbReference type="PROSITE" id="PS50056">
    <property type="entry name" value="TYR_PHOSPHATASE_2"/>
    <property type="match status" value="1"/>
</dbReference>
<dbReference type="PROSITE" id="PS50055">
    <property type="entry name" value="TYR_PHOSPHATASE_PTP"/>
    <property type="match status" value="1"/>
</dbReference>
<proteinExistence type="evidence at protein level"/>
<accession>O13016</accession>
<accession>Q90704</accession>
<organism>
    <name type="scientific">Gallus gallus</name>
    <name type="common">Chicken</name>
    <dbReference type="NCBI Taxonomy" id="9031"/>
    <lineage>
        <taxon>Eukaryota</taxon>
        <taxon>Metazoa</taxon>
        <taxon>Chordata</taxon>
        <taxon>Craniata</taxon>
        <taxon>Vertebrata</taxon>
        <taxon>Euteleostomi</taxon>
        <taxon>Archelosauria</taxon>
        <taxon>Archosauria</taxon>
        <taxon>Dinosauria</taxon>
        <taxon>Saurischia</taxon>
        <taxon>Theropoda</taxon>
        <taxon>Coelurosauria</taxon>
        <taxon>Aves</taxon>
        <taxon>Neognathae</taxon>
        <taxon>Galloanserae</taxon>
        <taxon>Galliformes</taxon>
        <taxon>Phasianidae</taxon>
        <taxon>Phasianinae</taxon>
        <taxon>Gallus</taxon>
    </lineage>
</organism>
<reference key="1">
    <citation type="journal article" date="1996" name="J. Cell Biol.">
        <title>Regulated binding of PTP1B-like phosphatase to N-cadherin: control of cadherin-mediated adhesion by dephosphorylation of beta-catenin.</title>
        <authorList>
            <person name="Balsamo J."/>
            <person name="Leung T."/>
            <person name="Ernst H."/>
            <person name="Zanin M.K."/>
            <person name="Hoffman S."/>
            <person name="Lilien J."/>
        </authorList>
    </citation>
    <scope>NUCLEOTIDE SEQUENCE [MRNA]</scope>
    <source>
        <tissue>Retina</tissue>
    </source>
</reference>
<reference key="2">
    <citation type="journal article" date="1998" name="Biochem. Biophys. Res. Commun.">
        <title>Multiple phosphorylation of chicken protein tyrosine phosphatase 1 and human protein tyrosine phosphatase 1B by casein kinase II and p60c-src in vitro.</title>
        <authorList>
            <person name="Jung E.J."/>
            <person name="Kang Y.-S."/>
            <person name="Kim C.W."/>
        </authorList>
    </citation>
    <scope>NUCLEOTIDE SEQUENCE [MRNA]</scope>
</reference>
<reference key="3">
    <citation type="journal article" date="1996" name="Exp. Mol. Med.">
        <title>Cloning and characterization of a chicken protein tyrosine phosphatase, CPTP1.</title>
        <authorList>
            <person name="Kim C.W."/>
            <person name="Jung E.J."/>
            <person name="Kang Y.-S."/>
        </authorList>
    </citation>
    <scope>NUCLEOTIDE SEQUENCE [MRNA] OF 14-369</scope>
    <source>
        <tissue>Intestine</tissue>
    </source>
</reference>
<evidence type="ECO:0000250" key="1"/>
<evidence type="ECO:0000250" key="2">
    <source>
        <dbReference type="UniProtKB" id="P18031"/>
    </source>
</evidence>
<evidence type="ECO:0000255" key="3">
    <source>
        <dbReference type="PROSITE-ProRule" id="PRU00160"/>
    </source>
</evidence>
<evidence type="ECO:0000255" key="4">
    <source>
        <dbReference type="PROSITE-ProRule" id="PRU10044"/>
    </source>
</evidence>
<evidence type="ECO:0000256" key="5">
    <source>
        <dbReference type="SAM" id="MobiDB-lite"/>
    </source>
</evidence>
<evidence type="ECO:0000305" key="6"/>